<dbReference type="EMBL" id="AL139385">
    <property type="status" value="NOT_ANNOTATED_CDS"/>
    <property type="molecule type" value="Genomic_DNA"/>
</dbReference>
<dbReference type="EMBL" id="AL159153">
    <property type="status" value="NOT_ANNOTATED_CDS"/>
    <property type="molecule type" value="Genomic_DNA"/>
</dbReference>
<dbReference type="EMBL" id="AL161773">
    <property type="status" value="NOT_ANNOTATED_CDS"/>
    <property type="molecule type" value="Genomic_DNA"/>
</dbReference>
<dbReference type="EMBL" id="X05562">
    <property type="protein sequence ID" value="CAA29076.1"/>
    <property type="molecule type" value="mRNA"/>
</dbReference>
<dbReference type="EMBL" id="M36963">
    <property type="protein sequence ID" value="AAA53099.1"/>
    <property type="molecule type" value="Genomic_DNA"/>
</dbReference>
<dbReference type="EMBL" id="J04217">
    <property type="protein sequence ID" value="AAA53097.1"/>
    <property type="molecule type" value="Genomic_DNA"/>
</dbReference>
<dbReference type="EMBL" id="X12784">
    <property type="protein sequence ID" value="CAA31275.1"/>
    <property type="molecule type" value="Genomic_DNA"/>
</dbReference>
<dbReference type="EMBL" id="M24766">
    <property type="protein sequence ID" value="AAA52043.1"/>
    <property type="molecule type" value="mRNA"/>
</dbReference>
<dbReference type="EMBL" id="X05610">
    <property type="protein sequence ID" value="CAA29098.1"/>
    <property type="molecule type" value="mRNA"/>
</dbReference>
<dbReference type="EMBL" id="BC080644">
    <property type="protein sequence ID" value="AAH80644.1"/>
    <property type="molecule type" value="mRNA"/>
</dbReference>
<dbReference type="EMBL" id="J02760">
    <property type="protein sequence ID" value="AAA58422.1"/>
    <property type="molecule type" value="mRNA"/>
</dbReference>
<dbReference type="EMBL" id="AF258350">
    <property type="protein sequence ID" value="AAF72631.1"/>
    <property type="molecule type" value="mRNA"/>
</dbReference>
<dbReference type="EMBL" id="AF400430">
    <property type="protein sequence ID" value="AAK92479.1"/>
    <property type="molecule type" value="mRNA"/>
</dbReference>
<dbReference type="EMBL" id="AY450357">
    <property type="protein sequence ID" value="AAR20245.1"/>
    <property type="molecule type" value="mRNA"/>
</dbReference>
<dbReference type="EMBL" id="AY455978">
    <property type="protein sequence ID" value="AAR18250.1"/>
    <property type="molecule type" value="mRNA"/>
</dbReference>
<dbReference type="CCDS" id="CCDS41907.1"/>
<dbReference type="PIR" id="A32024">
    <property type="entry name" value="CGHU2B"/>
</dbReference>
<dbReference type="RefSeq" id="NP_001837.2">
    <property type="nucleotide sequence ID" value="NM_001846.4"/>
</dbReference>
<dbReference type="PDB" id="1LI1">
    <property type="method" value="X-ray"/>
    <property type="resolution" value="1.90 A"/>
    <property type="chains" value="C/F=1485-1712"/>
</dbReference>
<dbReference type="PDB" id="5NAX">
    <property type="method" value="X-ray"/>
    <property type="resolution" value="2.82 A"/>
    <property type="chains" value="C/E=1485-1712"/>
</dbReference>
<dbReference type="PDB" id="5NB2">
    <property type="method" value="X-ray"/>
    <property type="resolution" value="2.50 A"/>
    <property type="chains" value="A/B=1485-1712"/>
</dbReference>
<dbReference type="PDB" id="6MPX">
    <property type="method" value="X-ray"/>
    <property type="resolution" value="1.90 A"/>
    <property type="chains" value="A=1489-1709"/>
</dbReference>
<dbReference type="PDBsum" id="1LI1"/>
<dbReference type="PDBsum" id="5NAX"/>
<dbReference type="PDBsum" id="5NB2"/>
<dbReference type="PDBsum" id="6MPX"/>
<dbReference type="SMR" id="P08572"/>
<dbReference type="BioGRID" id="107681">
    <property type="interactions" value="56"/>
</dbReference>
<dbReference type="ComplexPortal" id="CPX-1723">
    <property type="entry name" value="Collagen type IV trimer variant 1"/>
</dbReference>
<dbReference type="FunCoup" id="P08572">
    <property type="interactions" value="650"/>
</dbReference>
<dbReference type="IntAct" id="P08572">
    <property type="interactions" value="46"/>
</dbReference>
<dbReference type="MINT" id="P08572"/>
<dbReference type="STRING" id="9606.ENSP00000353654"/>
<dbReference type="ChEMBL" id="CHEMBL2364188"/>
<dbReference type="GlyCosmos" id="P08572">
    <property type="glycosylation" value="2 sites, 2 glycans"/>
</dbReference>
<dbReference type="GlyGen" id="P08572">
    <property type="glycosylation" value="20 sites, 2 N-linked glycans (2 sites), 4 O-linked glycans (14 sites)"/>
</dbReference>
<dbReference type="iPTMnet" id="P08572"/>
<dbReference type="PhosphoSitePlus" id="P08572"/>
<dbReference type="SwissPalm" id="P08572"/>
<dbReference type="BioMuta" id="COL4A2"/>
<dbReference type="DMDM" id="143811377"/>
<dbReference type="jPOST" id="P08572"/>
<dbReference type="MassIVE" id="P08572"/>
<dbReference type="PaxDb" id="9606-ENSP00000353654"/>
<dbReference type="PeptideAtlas" id="P08572"/>
<dbReference type="ProteomicsDB" id="52123"/>
<dbReference type="Pumba" id="P08572"/>
<dbReference type="Antibodypedia" id="4381">
    <property type="antibodies" value="227 antibodies from 30 providers"/>
</dbReference>
<dbReference type="DNASU" id="1284"/>
<dbReference type="Ensembl" id="ENST00000360467.7">
    <property type="protein sequence ID" value="ENSP00000353654.5"/>
    <property type="gene ID" value="ENSG00000134871.20"/>
</dbReference>
<dbReference type="Ensembl" id="ENST00000400163.8">
    <property type="protein sequence ID" value="ENSP00000383027.4"/>
    <property type="gene ID" value="ENSG00000134871.20"/>
</dbReference>
<dbReference type="GeneID" id="1284"/>
<dbReference type="KEGG" id="hsa:1284"/>
<dbReference type="MANE-Select" id="ENST00000360467.7">
    <property type="protein sequence ID" value="ENSP00000353654.5"/>
    <property type="RefSeq nucleotide sequence ID" value="NM_001846.4"/>
    <property type="RefSeq protein sequence ID" value="NP_001837.2"/>
</dbReference>
<dbReference type="UCSC" id="uc001vqx.4">
    <property type="organism name" value="human"/>
</dbReference>
<dbReference type="AGR" id="HGNC:2203"/>
<dbReference type="CTD" id="1284"/>
<dbReference type="DisGeNET" id="1284"/>
<dbReference type="GeneCards" id="COL4A2"/>
<dbReference type="HGNC" id="HGNC:2203">
    <property type="gene designation" value="COL4A2"/>
</dbReference>
<dbReference type="HPA" id="ENSG00000134871">
    <property type="expression patterns" value="Tissue enhanced (placenta)"/>
</dbReference>
<dbReference type="MalaCards" id="COL4A2"/>
<dbReference type="MIM" id="120090">
    <property type="type" value="gene"/>
</dbReference>
<dbReference type="MIM" id="614483">
    <property type="type" value="phenotype"/>
</dbReference>
<dbReference type="MIM" id="614519">
    <property type="type" value="phenotype"/>
</dbReference>
<dbReference type="neXtProt" id="NX_P08572"/>
<dbReference type="OpenTargets" id="ENSG00000134871"/>
<dbReference type="Orphanet" id="36383">
    <property type="disease" value="COL4A1/2-related familial vascular leukoencephalopathy"/>
</dbReference>
<dbReference type="Orphanet" id="99810">
    <property type="disease" value="Familial porencephaly"/>
</dbReference>
<dbReference type="PharmGKB" id="PA26718"/>
<dbReference type="VEuPathDB" id="HostDB:ENSG00000134871"/>
<dbReference type="eggNOG" id="KOG3544">
    <property type="taxonomic scope" value="Eukaryota"/>
</dbReference>
<dbReference type="GeneTree" id="ENSGT00940000157234"/>
<dbReference type="HOGENOM" id="CLU_002023_1_0_1"/>
<dbReference type="InParanoid" id="P08572"/>
<dbReference type="OMA" id="DDGWPGT"/>
<dbReference type="OrthoDB" id="10071882at2759"/>
<dbReference type="PAN-GO" id="P08572">
    <property type="GO annotations" value="6 GO annotations based on evolutionary models"/>
</dbReference>
<dbReference type="PhylomeDB" id="P08572"/>
<dbReference type="TreeFam" id="TF344135"/>
<dbReference type="PathwayCommons" id="P08572"/>
<dbReference type="Reactome" id="R-HSA-1442490">
    <property type="pathway name" value="Collagen degradation"/>
</dbReference>
<dbReference type="Reactome" id="R-HSA-1474244">
    <property type="pathway name" value="Extracellular matrix organization"/>
</dbReference>
<dbReference type="Reactome" id="R-HSA-1650814">
    <property type="pathway name" value="Collagen biosynthesis and modifying enzymes"/>
</dbReference>
<dbReference type="Reactome" id="R-HSA-186797">
    <property type="pathway name" value="Signaling by PDGF"/>
</dbReference>
<dbReference type="Reactome" id="R-HSA-2022090">
    <property type="pathway name" value="Assembly of collagen fibrils and other multimeric structures"/>
</dbReference>
<dbReference type="Reactome" id="R-HSA-216083">
    <property type="pathway name" value="Integrin cell surface interactions"/>
</dbReference>
<dbReference type="Reactome" id="R-HSA-2214320">
    <property type="pathway name" value="Anchoring fibril formation"/>
</dbReference>
<dbReference type="Reactome" id="R-HSA-2243919">
    <property type="pathway name" value="Crosslinking of collagen fibrils"/>
</dbReference>
<dbReference type="Reactome" id="R-HSA-3000157">
    <property type="pathway name" value="Laminin interactions"/>
</dbReference>
<dbReference type="Reactome" id="R-HSA-3000171">
    <property type="pathway name" value="Non-integrin membrane-ECM interactions"/>
</dbReference>
<dbReference type="Reactome" id="R-HSA-3000178">
    <property type="pathway name" value="ECM proteoglycans"/>
</dbReference>
<dbReference type="Reactome" id="R-HSA-3000480">
    <property type="pathway name" value="Scavenging by Class A Receptors"/>
</dbReference>
<dbReference type="Reactome" id="R-HSA-419037">
    <property type="pathway name" value="NCAM1 interactions"/>
</dbReference>
<dbReference type="Reactome" id="R-HSA-8948216">
    <property type="pathway name" value="Collagen chain trimerization"/>
</dbReference>
<dbReference type="SignaLink" id="P08572"/>
<dbReference type="SIGNOR" id="P08572"/>
<dbReference type="BioGRID-ORCS" id="1284">
    <property type="hits" value="14 hits in 1154 CRISPR screens"/>
</dbReference>
<dbReference type="ChiTaRS" id="COL4A2">
    <property type="organism name" value="human"/>
</dbReference>
<dbReference type="EvolutionaryTrace" id="P08572"/>
<dbReference type="GeneWiki" id="COL4A2"/>
<dbReference type="GenomeRNAi" id="1284"/>
<dbReference type="Pharos" id="P08572">
    <property type="development level" value="Tbio"/>
</dbReference>
<dbReference type="PRO" id="PR:P08572"/>
<dbReference type="Proteomes" id="UP000005640">
    <property type="component" value="Chromosome 13"/>
</dbReference>
<dbReference type="RNAct" id="P08572">
    <property type="molecule type" value="protein"/>
</dbReference>
<dbReference type="Bgee" id="ENSG00000134871">
    <property type="expression patterns" value="Expressed in saphenous vein and 198 other cell types or tissues"/>
</dbReference>
<dbReference type="ExpressionAtlas" id="P08572">
    <property type="expression patterns" value="baseline and differential"/>
</dbReference>
<dbReference type="GO" id="GO:0005587">
    <property type="term" value="C:collagen type IV trimer"/>
    <property type="evidence" value="ECO:0000318"/>
    <property type="project" value="GO_Central"/>
</dbReference>
<dbReference type="GO" id="GO:0062023">
    <property type="term" value="C:collagen-containing extracellular matrix"/>
    <property type="evidence" value="ECO:0007005"/>
    <property type="project" value="UniProtKB"/>
</dbReference>
<dbReference type="GO" id="GO:0005788">
    <property type="term" value="C:endoplasmic reticulum lumen"/>
    <property type="evidence" value="ECO:0000304"/>
    <property type="project" value="Reactome"/>
</dbReference>
<dbReference type="GO" id="GO:0070062">
    <property type="term" value="C:extracellular exosome"/>
    <property type="evidence" value="ECO:0007005"/>
    <property type="project" value="UniProtKB"/>
</dbReference>
<dbReference type="GO" id="GO:0005576">
    <property type="term" value="C:extracellular region"/>
    <property type="evidence" value="ECO:0000304"/>
    <property type="project" value="Reactome"/>
</dbReference>
<dbReference type="GO" id="GO:0005615">
    <property type="term" value="C:extracellular space"/>
    <property type="evidence" value="ECO:0000318"/>
    <property type="project" value="GO_Central"/>
</dbReference>
<dbReference type="GO" id="GO:0005201">
    <property type="term" value="F:extracellular matrix structural constituent"/>
    <property type="evidence" value="ECO:0000304"/>
    <property type="project" value="UniProtKB"/>
</dbReference>
<dbReference type="GO" id="GO:0030020">
    <property type="term" value="F:extracellular matrix structural constituent conferring tensile strength"/>
    <property type="evidence" value="ECO:0007005"/>
    <property type="project" value="BHF-UCL"/>
</dbReference>
<dbReference type="GO" id="GO:0060090">
    <property type="term" value="F:molecular adaptor activity"/>
    <property type="evidence" value="ECO:0000269"/>
    <property type="project" value="DisProt"/>
</dbReference>
<dbReference type="GO" id="GO:0001525">
    <property type="term" value="P:angiogenesis"/>
    <property type="evidence" value="ECO:0007669"/>
    <property type="project" value="UniProtKB-KW"/>
</dbReference>
<dbReference type="GO" id="GO:0071560">
    <property type="term" value="P:cellular response to transforming growth factor beta stimulus"/>
    <property type="evidence" value="ECO:0007669"/>
    <property type="project" value="Ensembl"/>
</dbReference>
<dbReference type="GO" id="GO:0038063">
    <property type="term" value="P:collagen-activated tyrosine kinase receptor signaling pathway"/>
    <property type="evidence" value="ECO:0000318"/>
    <property type="project" value="GO_Central"/>
</dbReference>
<dbReference type="GO" id="GO:0006351">
    <property type="term" value="P:DNA-templated transcription"/>
    <property type="evidence" value="ECO:0007669"/>
    <property type="project" value="Ensembl"/>
</dbReference>
<dbReference type="GO" id="GO:0035987">
    <property type="term" value="P:endodermal cell differentiation"/>
    <property type="evidence" value="ECO:0000270"/>
    <property type="project" value="UniProtKB"/>
</dbReference>
<dbReference type="GO" id="GO:0030198">
    <property type="term" value="P:extracellular matrix organization"/>
    <property type="evidence" value="ECO:0000303"/>
    <property type="project" value="UniProtKB"/>
</dbReference>
<dbReference type="GO" id="GO:0016525">
    <property type="term" value="P:negative regulation of angiogenesis"/>
    <property type="evidence" value="ECO:0000314"/>
    <property type="project" value="UniProtKB"/>
</dbReference>
<dbReference type="GO" id="GO:0014823">
    <property type="term" value="P:response to activity"/>
    <property type="evidence" value="ECO:0007669"/>
    <property type="project" value="Ensembl"/>
</dbReference>
<dbReference type="DisProt" id="DP02953"/>
<dbReference type="FunFam" id="2.170.240.10:FF:000001">
    <property type="entry name" value="Collagen IV alpha 1 chain"/>
    <property type="match status" value="1"/>
</dbReference>
<dbReference type="Gene3D" id="2.170.240.10">
    <property type="entry name" value="Collagen IV, non-collagenous"/>
    <property type="match status" value="1"/>
</dbReference>
<dbReference type="InterPro" id="IPR008160">
    <property type="entry name" value="Collagen"/>
</dbReference>
<dbReference type="InterPro" id="IPR001442">
    <property type="entry name" value="Collagen_IV_NC"/>
</dbReference>
<dbReference type="InterPro" id="IPR036954">
    <property type="entry name" value="Collagen_IV_NC_sf"/>
</dbReference>
<dbReference type="InterPro" id="IPR050149">
    <property type="entry name" value="Collagen_superfamily"/>
</dbReference>
<dbReference type="InterPro" id="IPR016187">
    <property type="entry name" value="CTDL_fold"/>
</dbReference>
<dbReference type="PANTHER" id="PTHR24023">
    <property type="entry name" value="COLLAGEN ALPHA"/>
    <property type="match status" value="1"/>
</dbReference>
<dbReference type="PANTHER" id="PTHR24023:SF1082">
    <property type="entry name" value="COLLAGEN TRIPLE HELIX REPEAT"/>
    <property type="match status" value="1"/>
</dbReference>
<dbReference type="Pfam" id="PF01413">
    <property type="entry name" value="C4"/>
    <property type="match status" value="2"/>
</dbReference>
<dbReference type="Pfam" id="PF01391">
    <property type="entry name" value="Collagen"/>
    <property type="match status" value="18"/>
</dbReference>
<dbReference type="SMART" id="SM00111">
    <property type="entry name" value="C4"/>
    <property type="match status" value="2"/>
</dbReference>
<dbReference type="SUPFAM" id="SSF56436">
    <property type="entry name" value="C-type lectin-like"/>
    <property type="match status" value="2"/>
</dbReference>
<dbReference type="PROSITE" id="PS51403">
    <property type="entry name" value="NC1_IV"/>
    <property type="match status" value="1"/>
</dbReference>
<accession>P08572</accession>
<accession>Q14052</accession>
<accession>Q548C3</accession>
<accession>Q5VZA9</accession>
<accession>Q66K23</accession>
<protein>
    <recommendedName>
        <fullName evidence="13">Collagen alpha-2(IV) chain</fullName>
    </recommendedName>
    <component>
        <recommendedName>
            <fullName>Canstatin</fullName>
        </recommendedName>
    </component>
</protein>
<sequence>MGRDQRAVAGPALRRWLLLGTVTVGFLAQSVLAGVKKFDVPCGGRDCSGGCQCYPEKGGRGQPGPVGPQGYNGPPGLQGFPGLQGRKGDKGERGAPGVTGPKGDVGARGVSGFPGADGIPGHPGQGGPRGRPGYDGCNGTQGDSGPQGPPGSEGFTGPPGPQGPKGQKGEPYALPKEERDRYRGEPGEPGLVGFQGPPGRPGHVGQMGPVGAPGRPGPPGPPGPKGQQGNRGLGFYGVKGEKGDVGQPGPNGIPSDTLHPIIAPTGVTFHPDQYKGEKGSEGEPGIRGISLKGEEGIMGFPGLRGYPGLSGEKGSPGQKGSRGLDGYQGPDGPRGPKGEAGDPGPPGLPAYSPHPSLAKGARGDPGFPGAQGEPGSQGEPGDPGLPGPPGLSIGDGDQRRGLPGEMGPKGFIGDPGIPALYGGPPGPDGKRGPPGPPGLPGPPGPDGFLFGLKGAKGRAGFPGLPGSPGARGPKGWKGDAGECRCTEGDEAIKGLPGLPGPKGFAGINGEPGRKGDRGDPGQHGLPGFPGLKGVPGNIGAPGPKGAKGDSRTITTKGERGQPGVPGVPGMKGDDGSPGRDGLDGFPGLPGPPGDGIKGPPGDPGYPGIPGTKGTPGEMGPPGLGLPGLKGQRGFPGDAGLPGPPGFLGPPGPAGTPGQIDCDTDVKRAVGGDRQEAIQPGCIGGPKGLPGLPGPPGPTGAKGLRGIPGFAGADGGPGPRGLPGDAGREGFPGPPGFIGPRGSKGAVGLPGPDGSPGPIGLPGPDGPPGERGLPGEVLGAQPGPRGDAGVPGQPGLKGLPGDRGPPGFRGSQGMPGMPGLKGQPGLPGPSGQPGLYGPPGLHGFPGAPGQEGPLGLPGIPGREGLPGDRGDPGDTGAPGPVGMKGLSGDRGDAGFTGEQGHPGSPGFKGIDGMPGTPGLKGDRGSPGMDGFQGMPGLKGRPGFPGSKGEAGFFGIPGLKGLAGEPGFKGSRGDPGPPGPPPVILPGMKDIKGEKGDEGPMGLKGYLGAKGIQGMPGIPGLSGIPGLPGRPGHIKGVKGDIGVPGIPGLPGFPGVAGPPGITGFPGFIGSRGDKGAPGRAGLYGEIGATGDFGDIGDTINLPGRPGLKGERGTTGIPGLKGFFGEKGTEGDIGFPGITGVTGVQGPPGLKGQTGFPGLTGPPGSQGELGRIGLPGGKGDDGWPGAPGLPGFPGLRGIRGLHGLPGTKGFPGSPGSDIHGDPGFPGPPGERGDPGEANTLPGPVGVPGQKGDQGAPGERGPPGSPGLQGFPGITPPSNISGAPGDKGAPGIFGLKGYRGPPGPPGSAALPGSKGDTGNPGAPGTPGTKGWAGDSGPQGRPGVFGLPGEKGPRGEQGFMGNTGPTGAVGDRGPKGPKGDPGFPGAPGTVGAPGIAGIPQKIAVQPGTVGPQGRRGPPGAPGEMGPQGPPGEPGFRGAPGKAGPQGRGGVSAVPGFRGDEGPIGHQGPIGQEGAPGRPGSPGLPGMPGRSVSIGYLLVKHSQTDQEPMCPVGMNKLWSGYSLLYFEGQEKAHNQDLGLAGSCLARFSTMPFLYCNPGDVCYYASRNDKSYWLSTTAPLPMMPVAEDEIKPYISRCSVCEAPAIAIAVHSQDVSIPHCPAGWRSLWIGYSFLMHTAAGDEGGGQSLVSPGSCLEDFRATPFIECNGGRGTCHYYANKYSFWLTTIPEQSFQGSPSADTLKAGLIRTHISRCQVCMKNL</sequence>
<gene>
    <name evidence="14" type="primary">COL4A2</name>
</gene>
<feature type="signal peptide">
    <location>
        <begin position="1"/>
        <end position="25"/>
    </location>
</feature>
<feature type="propeptide" id="PRO_0000005824" description="N-terminal propeptide (7S domain)">
    <location>
        <begin position="26"/>
        <end position="183"/>
    </location>
</feature>
<feature type="chain" id="PRO_0000005825" description="Collagen alpha-2(IV) chain">
    <location>
        <begin position="184"/>
        <end position="1712"/>
    </location>
</feature>
<feature type="chain" id="PRO_0000283775" description="Canstatin">
    <location>
        <begin position="1486"/>
        <end position="1712"/>
    </location>
</feature>
<feature type="domain" description="Collagen IV NC1" evidence="3">
    <location>
        <begin position="1489"/>
        <end position="1712"/>
    </location>
</feature>
<feature type="region of interest" description="Disordered" evidence="4">
    <location>
        <begin position="60"/>
        <end position="237"/>
    </location>
</feature>
<feature type="region of interest" description="Triple-helical region">
    <location>
        <begin position="184"/>
        <end position="1484"/>
    </location>
</feature>
<feature type="region of interest" description="Disordered" evidence="4">
    <location>
        <begin position="302"/>
        <end position="448"/>
    </location>
</feature>
<feature type="region of interest" description="Disordered" evidence="4">
    <location>
        <begin position="507"/>
        <end position="640"/>
    </location>
</feature>
<feature type="region of interest" description="Disordered" evidence="4">
    <location>
        <begin position="690"/>
        <end position="906"/>
    </location>
</feature>
<feature type="region of interest" description="Disordered" evidence="4">
    <location>
        <begin position="1157"/>
        <end position="1480"/>
    </location>
</feature>
<feature type="compositionally biased region" description="Low complexity" evidence="4">
    <location>
        <begin position="68"/>
        <end position="84"/>
    </location>
</feature>
<feature type="compositionally biased region" description="Gly residues" evidence="4">
    <location>
        <begin position="121"/>
        <end position="130"/>
    </location>
</feature>
<feature type="compositionally biased region" description="Low complexity" evidence="4">
    <location>
        <begin position="140"/>
        <end position="153"/>
    </location>
</feature>
<feature type="compositionally biased region" description="Basic and acidic residues" evidence="4">
    <location>
        <begin position="175"/>
        <end position="186"/>
    </location>
</feature>
<feature type="compositionally biased region" description="Pro residues" evidence="4">
    <location>
        <begin position="215"/>
        <end position="224"/>
    </location>
</feature>
<feature type="compositionally biased region" description="Pro residues" evidence="4">
    <location>
        <begin position="433"/>
        <end position="445"/>
    </location>
</feature>
<feature type="compositionally biased region" description="Basic and acidic residues" evidence="4">
    <location>
        <begin position="511"/>
        <end position="520"/>
    </location>
</feature>
<feature type="compositionally biased region" description="Basic and acidic residues" evidence="4">
    <location>
        <begin position="571"/>
        <end position="582"/>
    </location>
</feature>
<feature type="compositionally biased region" description="Low complexity" evidence="4">
    <location>
        <begin position="628"/>
        <end position="640"/>
    </location>
</feature>
<feature type="compositionally biased region" description="Low complexity" evidence="4">
    <location>
        <begin position="698"/>
        <end position="710"/>
    </location>
</feature>
<feature type="compositionally biased region" description="Gly residues" evidence="4">
    <location>
        <begin position="711"/>
        <end position="720"/>
    </location>
</feature>
<feature type="compositionally biased region" description="Low complexity" evidence="4">
    <location>
        <begin position="721"/>
        <end position="730"/>
    </location>
</feature>
<feature type="compositionally biased region" description="Pro residues" evidence="4">
    <location>
        <begin position="752"/>
        <end position="766"/>
    </location>
</feature>
<feature type="compositionally biased region" description="Low complexity" evidence="4">
    <location>
        <begin position="769"/>
        <end position="778"/>
    </location>
</feature>
<feature type="compositionally biased region" description="Low complexity" evidence="4">
    <location>
        <begin position="813"/>
        <end position="823"/>
    </location>
</feature>
<feature type="compositionally biased region" description="Low complexity" evidence="4">
    <location>
        <begin position="831"/>
        <end position="844"/>
    </location>
</feature>
<feature type="compositionally biased region" description="Low complexity" evidence="4">
    <location>
        <begin position="1302"/>
        <end position="1328"/>
    </location>
</feature>
<feature type="compositionally biased region" description="Low complexity" evidence="4">
    <location>
        <begin position="1400"/>
        <end position="1421"/>
    </location>
</feature>
<feature type="modified residue" description="3'-bromotyrosine" evidence="10">
    <location>
        <position position="1490"/>
    </location>
</feature>
<feature type="glycosylation site" description="N-linked (GlcNAc...) asparagine" evidence="9">
    <location>
        <position position="138"/>
    </location>
</feature>
<feature type="disulfide bond">
    <location>
        <begin position="1504"/>
        <end position="1593"/>
    </location>
</feature>
<feature type="disulfide bond">
    <location>
        <begin position="1537"/>
        <end position="1590"/>
    </location>
</feature>
<feature type="disulfide bond">
    <location>
        <begin position="1549"/>
        <end position="1555"/>
    </location>
</feature>
<feature type="disulfide bond">
    <location>
        <begin position="1612"/>
        <end position="1708"/>
    </location>
</feature>
<feature type="disulfide bond">
    <location>
        <begin position="1646"/>
        <end position="1705"/>
    </location>
</feature>
<feature type="disulfide bond">
    <location>
        <begin position="1658"/>
        <end position="1665"/>
    </location>
</feature>
<feature type="sequence variant" id="VAR_067551" description="Does not affect COL4A2 and COL4A1 secretion; dbSNP:rs62621885." evidence="5 7">
    <original>V</original>
    <variation>F</variation>
    <location>
        <position position="192"/>
    </location>
</feature>
<feature type="sequence variant" id="VAR_048796" description="In dbSNP:rs7990383." evidence="5 7 11">
    <original>R</original>
    <variation>K</variation>
    <location>
        <position position="517"/>
    </location>
</feature>
<feature type="sequence variant" id="VAR_048797" description="In dbSNP:rs3803230." evidence="5 7 11">
    <original>G</original>
    <variation>A</variation>
    <location>
        <position position="683"/>
    </location>
</feature>
<feature type="sequence variant" id="VAR_067552" description="Does not affect COL4A2 and COL4A1 secretion; dbSNP:rs78829338." evidence="5 7">
    <original>K</original>
    <variation>R</variation>
    <location>
        <position position="701"/>
    </location>
</feature>
<feature type="sequence variant" id="VAR_067836" description="Does not affect COL4A2 and COL4A1 secretion; dbSNP:rs9583500." evidence="5 7">
    <original>P</original>
    <variation>S</variation>
    <location>
        <position position="718"/>
    </location>
</feature>
<feature type="sequence variant" id="VAR_067837" description="In BSVD2; dbSNP:rs387906603." evidence="6">
    <original>G</original>
    <variation>E</variation>
    <location>
        <position position="1037"/>
    </location>
</feature>
<feature type="sequence variant" id="VAR_067553" description="Does not affect COL4A2 and COL4A1 secretion; dbSNP:rs184812559." evidence="7">
    <original>R</original>
    <variation>Q</variation>
    <location>
        <position position="1109"/>
    </location>
</feature>
<feature type="sequence variant" id="VAR_067554" description="Risk factor for ICH; results in a significantly decreased extracellular-to-intracellular ratio of COL4A2 and COL4A1 proteins, indicating interference with the proper secretion of both these proteins; dbSNP:rs117412802." evidence="7">
    <original>E</original>
    <variation>G</variation>
    <location>
        <position position="1123"/>
    </location>
</feature>
<feature type="sequence variant" id="VAR_067555" description="Risk factor for ICH; results in a significantly decreased extracellular-to-intracellular ratio of COL4A2 and COL4A1 proteins, indicating interference with the proper secretion of both these proteins; dbSNP:rs62621875." evidence="7">
    <original>Q</original>
    <variation>K</variation>
    <location>
        <position position="1150"/>
    </location>
</feature>
<feature type="sequence variant" id="VAR_067838" description="In BSVD2; incomplete penetrance; dbSNP:rs387906602." evidence="6">
    <original>G</original>
    <variation>D</variation>
    <location>
        <position position="1152"/>
    </location>
</feature>
<feature type="sequence variant" id="VAR_067556" description="Found in a family with porencephaly and small-vessel disease in the form of scattered white matter lesions; likely pathogenic; impairs COL4A2 and COL4A1 secretion; the mutant protein is retained in the endoplasmic reticulum; dbSNP:rs1670170578." evidence="8">
    <original>G</original>
    <variation>R</variation>
    <location>
        <position position="1389"/>
    </location>
</feature>
<feature type="sequence variant" id="VAR_067557" description="In dbSNP:rs45520539." evidence="7 12">
    <original>V</original>
    <variation>I</variation>
    <location>
        <position position="1399"/>
    </location>
</feature>
<feature type="sequence variant" id="VAR_067558" description="Risk factor for ICH; results in a significantly decreased extracellular-to-intracellular ratio of COL4A2 and COL4A1 proteins, indicating interference with the proper secretion of both these proteins; dbSNP:rs201105747." evidence="7">
    <original>A</original>
    <variation>T</variation>
    <location>
        <position position="1690"/>
    </location>
</feature>
<feature type="sequence conflict" description="In Ref. 3; CAA29076." evidence="13" ref="3">
    <original>R</original>
    <variation>P</variation>
    <location>
        <position position="471"/>
    </location>
</feature>
<feature type="sequence conflict" description="In Ref. 7; AAA52043." evidence="13" ref="7">
    <original>V</original>
    <variation>L</variation>
    <location>
        <position position="1041"/>
    </location>
</feature>
<feature type="sequence conflict" description="In Ref. 8; CAA29098." evidence="13" ref="8">
    <original>M</original>
    <variation>I</variation>
    <location>
        <position position="1419"/>
    </location>
</feature>
<feature type="sequence conflict" description="In Ref. 12; AAA58422." evidence="13" ref="12">
    <original>M</original>
    <variation>I</variation>
    <location>
        <position position="1575"/>
    </location>
</feature>
<feature type="sequence conflict" description="In Ref. 7; AAA52043." evidence="13" ref="7">
    <original>G</original>
    <variation>V</variation>
    <location>
        <position position="1636"/>
    </location>
</feature>
<feature type="sequence conflict" description="In Ref. 11; AA sequence." evidence="13" ref="11">
    <original>G</original>
    <variation>H</variation>
    <location>
        <position position="1663"/>
    </location>
</feature>
<feature type="sequence conflict" description="In Ref. 11; AA sequence." evidence="13" ref="11">
    <original>H</original>
    <variation>G</variation>
    <location>
        <position position="1701"/>
    </location>
</feature>
<feature type="strand" evidence="15">
    <location>
        <begin position="1490"/>
        <end position="1495"/>
    </location>
</feature>
<feature type="strand" evidence="15">
    <location>
        <begin position="1497"/>
        <end position="1500"/>
    </location>
</feature>
<feature type="strand" evidence="15">
    <location>
        <begin position="1509"/>
        <end position="1522"/>
    </location>
</feature>
<feature type="strand" evidence="15">
    <location>
        <begin position="1525"/>
        <end position="1528"/>
    </location>
</feature>
<feature type="helix" evidence="15">
    <location>
        <begin position="1534"/>
        <end position="1536"/>
    </location>
</feature>
<feature type="strand" evidence="15">
    <location>
        <begin position="1537"/>
        <end position="1540"/>
    </location>
</feature>
<feature type="strand" evidence="15">
    <location>
        <begin position="1546"/>
        <end position="1550"/>
    </location>
</feature>
<feature type="turn" evidence="15">
    <location>
        <begin position="1551"/>
        <end position="1553"/>
    </location>
</feature>
<feature type="strand" evidence="15">
    <location>
        <begin position="1554"/>
        <end position="1558"/>
    </location>
</feature>
<feature type="strand" evidence="15">
    <location>
        <begin position="1563"/>
        <end position="1568"/>
    </location>
</feature>
<feature type="helix" evidence="15">
    <location>
        <begin position="1580"/>
        <end position="1586"/>
    </location>
</feature>
<feature type="strand" evidence="15">
    <location>
        <begin position="1589"/>
        <end position="1597"/>
    </location>
</feature>
<feature type="strand" evidence="15">
    <location>
        <begin position="1599"/>
        <end position="1603"/>
    </location>
</feature>
<feature type="strand" evidence="15">
    <location>
        <begin position="1605"/>
        <end position="1608"/>
    </location>
</feature>
<feature type="strand" evidence="15">
    <location>
        <begin position="1616"/>
        <end position="1629"/>
    </location>
</feature>
<feature type="strand" evidence="15">
    <location>
        <begin position="1635"/>
        <end position="1637"/>
    </location>
</feature>
<feature type="strand" evidence="16">
    <location>
        <begin position="1640"/>
        <end position="1642"/>
    </location>
</feature>
<feature type="helix" evidence="15">
    <location>
        <begin position="1643"/>
        <end position="1645"/>
    </location>
</feature>
<feature type="strand" evidence="15">
    <location>
        <begin position="1646"/>
        <end position="1649"/>
    </location>
</feature>
<feature type="strand" evidence="15">
    <location>
        <begin position="1655"/>
        <end position="1659"/>
    </location>
</feature>
<feature type="turn" evidence="15">
    <location>
        <begin position="1660"/>
        <end position="1663"/>
    </location>
</feature>
<feature type="strand" evidence="15">
    <location>
        <begin position="1664"/>
        <end position="1666"/>
    </location>
</feature>
<feature type="strand" evidence="15">
    <location>
        <begin position="1672"/>
        <end position="1677"/>
    </location>
</feature>
<feature type="strand" evidence="15">
    <location>
        <begin position="1680"/>
        <end position="1684"/>
    </location>
</feature>
<feature type="strand" evidence="15">
    <location>
        <begin position="1691"/>
        <end position="1694"/>
    </location>
</feature>
<feature type="helix" evidence="17">
    <location>
        <begin position="1695"/>
        <end position="1697"/>
    </location>
</feature>
<feature type="helix" evidence="15">
    <location>
        <begin position="1699"/>
        <end position="1701"/>
    </location>
</feature>
<feature type="strand" evidence="15">
    <location>
        <begin position="1704"/>
        <end position="1710"/>
    </location>
</feature>
<reference key="1">
    <citation type="journal article" date="1988" name="J. Biol. Chem.">
        <title>The complete primary structure of the alpha 2 chain of human type IV collagen and comparison with the alpha 1(IV) chain.</title>
        <authorList>
            <person name="Hostikka S.L."/>
            <person name="Tryggvason K."/>
        </authorList>
    </citation>
    <scope>NUCLEOTIDE SEQUENCE [MRNA]</scope>
</reference>
<reference key="2">
    <citation type="journal article" date="2004" name="Nature">
        <title>The DNA sequence and analysis of human chromosome 13.</title>
        <authorList>
            <person name="Dunham A."/>
            <person name="Matthews L.H."/>
            <person name="Burton J."/>
            <person name="Ashurst J.L."/>
            <person name="Howe K.L."/>
            <person name="Ashcroft K.J."/>
            <person name="Beare D.M."/>
            <person name="Burford D.C."/>
            <person name="Hunt S.E."/>
            <person name="Griffiths-Jones S."/>
            <person name="Jones M.C."/>
            <person name="Keenan S.J."/>
            <person name="Oliver K."/>
            <person name="Scott C.E."/>
            <person name="Ainscough R."/>
            <person name="Almeida J.P."/>
            <person name="Ambrose K.D."/>
            <person name="Andrews D.T."/>
            <person name="Ashwell R.I.S."/>
            <person name="Babbage A.K."/>
            <person name="Bagguley C.L."/>
            <person name="Bailey J."/>
            <person name="Bannerjee R."/>
            <person name="Barlow K.F."/>
            <person name="Bates K."/>
            <person name="Beasley H."/>
            <person name="Bird C.P."/>
            <person name="Bray-Allen S."/>
            <person name="Brown A.J."/>
            <person name="Brown J.Y."/>
            <person name="Burrill W."/>
            <person name="Carder C."/>
            <person name="Carter N.P."/>
            <person name="Chapman J.C."/>
            <person name="Clamp M.E."/>
            <person name="Clark S.Y."/>
            <person name="Clarke G."/>
            <person name="Clee C.M."/>
            <person name="Clegg S.C."/>
            <person name="Cobley V."/>
            <person name="Collins J.E."/>
            <person name="Corby N."/>
            <person name="Coville G.J."/>
            <person name="Deloukas P."/>
            <person name="Dhami P."/>
            <person name="Dunham I."/>
            <person name="Dunn M."/>
            <person name="Earthrowl M.E."/>
            <person name="Ellington A.G."/>
            <person name="Faulkner L."/>
            <person name="Frankish A.G."/>
            <person name="Frankland J."/>
            <person name="French L."/>
            <person name="Garner P."/>
            <person name="Garnett J."/>
            <person name="Gilbert J.G.R."/>
            <person name="Gilson C.J."/>
            <person name="Ghori J."/>
            <person name="Grafham D.V."/>
            <person name="Gribble S.M."/>
            <person name="Griffiths C."/>
            <person name="Hall R.E."/>
            <person name="Hammond S."/>
            <person name="Harley J.L."/>
            <person name="Hart E.A."/>
            <person name="Heath P.D."/>
            <person name="Howden P.J."/>
            <person name="Huckle E.J."/>
            <person name="Hunt P.J."/>
            <person name="Hunt A.R."/>
            <person name="Johnson C."/>
            <person name="Johnson D."/>
            <person name="Kay M."/>
            <person name="Kimberley A.M."/>
            <person name="King A."/>
            <person name="Laird G.K."/>
            <person name="Langford C.J."/>
            <person name="Lawlor S."/>
            <person name="Leongamornlert D.A."/>
            <person name="Lloyd D.M."/>
            <person name="Lloyd C."/>
            <person name="Loveland J.E."/>
            <person name="Lovell J."/>
            <person name="Martin S."/>
            <person name="Mashreghi-Mohammadi M."/>
            <person name="McLaren S.J."/>
            <person name="McMurray A."/>
            <person name="Milne S."/>
            <person name="Moore M.J.F."/>
            <person name="Nickerson T."/>
            <person name="Palmer S.A."/>
            <person name="Pearce A.V."/>
            <person name="Peck A.I."/>
            <person name="Pelan S."/>
            <person name="Phillimore B."/>
            <person name="Porter K.M."/>
            <person name="Rice C.M."/>
            <person name="Searle S."/>
            <person name="Sehra H.K."/>
            <person name="Shownkeen R."/>
            <person name="Skuce C.D."/>
            <person name="Smith M."/>
            <person name="Steward C.A."/>
            <person name="Sycamore N."/>
            <person name="Tester J."/>
            <person name="Thomas D.W."/>
            <person name="Tracey A."/>
            <person name="Tromans A."/>
            <person name="Tubby B."/>
            <person name="Wall M."/>
            <person name="Wallis J.M."/>
            <person name="West A.P."/>
            <person name="Whitehead S.L."/>
            <person name="Willey D.L."/>
            <person name="Wilming L."/>
            <person name="Wray P.W."/>
            <person name="Wright M.W."/>
            <person name="Young L."/>
            <person name="Coulson A."/>
            <person name="Durbin R.M."/>
            <person name="Hubbard T."/>
            <person name="Sulston J.E."/>
            <person name="Beck S."/>
            <person name="Bentley D.R."/>
            <person name="Rogers J."/>
            <person name="Ross M.T."/>
        </authorList>
    </citation>
    <scope>NUCLEOTIDE SEQUENCE [LARGE SCALE GENOMIC DNA]</scope>
</reference>
<reference key="3">
    <citation type="journal article" date="1988" name="Eur. J. Biochem.">
        <title>Human basement membrane collagen (type IV). The amino acid sequence of the alpha 2(IV) chain and its comparison with the alpha 1(IV) chain reveals deletions in the alpha 1(IV) chain.</title>
        <authorList>
            <person name="Brazel D."/>
            <person name="Pollner R."/>
            <person name="Oberbaeumer I."/>
            <person name="Kuehn K."/>
        </authorList>
    </citation>
    <scope>NUCLEOTIDE SEQUENCE [MRNA] OF 1-1042</scope>
    <scope>VARIANTS LYS-517 AND ALA-683</scope>
    <source>
        <tissue>Placenta</tissue>
    </source>
</reference>
<reference key="4">
    <citation type="journal article" date="1988" name="EMBO J.">
        <title>The genes for the alpha 1(IV) and alpha 2(IV) chains of human basement membrane collagen type IV are arranged head-to-head and separated by a bidirectional promoter of unique structure.</title>
        <authorList>
            <person name="Poeschl E."/>
            <person name="Pollner R."/>
            <person name="Kuehn K."/>
        </authorList>
    </citation>
    <scope>NUCLEOTIDE SEQUENCE [GENOMIC DNA] OF 1-33</scope>
</reference>
<reference key="5">
    <citation type="journal article" date="1988" name="J. Biol. Chem.">
        <title>The structural genes for alpha 1 and alpha 2 chains of human type IV collagen are divergently encoded on opposite DNA strands and have an overlapping promoter region.</title>
        <authorList>
            <person name="Soininen R."/>
            <person name="Huotari M."/>
            <person name="Hostikka S.L."/>
            <person name="Prockop D.J."/>
            <person name="Tryggvason K."/>
        </authorList>
    </citation>
    <scope>NUCLEOTIDE SEQUENCE [GENOMIC DNA] OF 1-33</scope>
</reference>
<reference key="6">
    <citation type="journal article" date="1993" name="Biochem. J.">
        <title>Identification of a novel sequence element in the common promoter region of human collagen type IV genes, involved in the regulation of divergent transcription.</title>
        <authorList>
            <person name="Fischer G."/>
            <person name="Schmidt C."/>
            <person name="Opitz J."/>
            <person name="Cully Z."/>
            <person name="Kuehn K."/>
            <person name="Poeschl E."/>
        </authorList>
    </citation>
    <scope>NUCLEOTIDE SEQUENCE [GENOMIC DNA] OF 1-33</scope>
    <source>
        <tissue>Skin</tissue>
    </source>
</reference>
<reference key="7">
    <citation type="journal article" date="1987" name="Hum. Genet.">
        <title>Partial structure of the human alpha 2(IV) collagen chain and chromosomal localization of the gene (COL4A2).</title>
        <authorList>
            <person name="Killen P.D."/>
            <person name="Francomano C.A."/>
            <person name="Yamada Y."/>
            <person name="Modi W.S."/>
            <person name="O'Brien S.J."/>
        </authorList>
    </citation>
    <scope>NUCLEOTIDE SEQUENCE [MRNA] OF 1040-1712</scope>
    <source>
        <tissue>Placenta</tissue>
    </source>
</reference>
<reference key="8">
    <citation type="journal article" date="1987" name="FEBS Lett.">
        <title>Nucleotide sequence coding for the human type IV collagen alpha 2 chain cDNA reveals extensive homology with the NC-1 domain of alpha 1 (IV) but not with the collagenous domain or 3'-untranslated region.</title>
        <authorList>
            <person name="Hostikka S.L."/>
            <person name="Kurkinen M."/>
            <person name="Tryggvason K."/>
        </authorList>
    </citation>
    <scope>NUCLEOTIDE SEQUENCE [MRNA] OF 1254-1712</scope>
    <scope>VARIANT ILE-1399</scope>
</reference>
<reference key="9">
    <citation type="journal article" date="2004" name="Genome Res.">
        <title>The status, quality, and expansion of the NIH full-length cDNA project: the Mammalian Gene Collection (MGC).</title>
        <authorList>
            <consortium name="The MGC Project Team"/>
        </authorList>
    </citation>
    <scope>NUCLEOTIDE SEQUENCE [LARGE SCALE MRNA] OF 1351-1712</scope>
    <source>
        <tissue>Eye</tissue>
    </source>
</reference>
<reference key="10">
    <citation type="journal article" date="1987" name="Proc. Natl. Acad. Sci. U.S.A.">
        <title>Human collagen genes encoding basement membrane alpha 1 (IV) and alpha 2 (IV) chains map to the distal long arm of chromosome 13.</title>
        <authorList>
            <person name="Griffin C.A."/>
            <person name="Emanuel B.S."/>
            <person name="Hansen J.R."/>
            <person name="Cavenee W.K."/>
            <person name="Myers J.C."/>
        </authorList>
    </citation>
    <scope>NUCLEOTIDE SEQUENCE [MRNA] OF 1451-1485</scope>
</reference>
<reference key="11">
    <citation type="journal article" date="1988" name="Eur. J. Biochem.">
        <title>The arrangement of intra- and intermolecular disulfide bonds in the carboxyterminal, non-collagenous aggregation and cross-linking domain of basement-membrane type IV collagen.</title>
        <authorList>
            <person name="Siebold B."/>
            <person name="Deutzmann R."/>
            <person name="Kuehn K."/>
        </authorList>
    </citation>
    <scope>PROTEIN SEQUENCE OF 1480-1535; 1545-1614; 1617-1701 AND 1705-1712</scope>
    <source>
        <tissue>Placenta</tissue>
    </source>
</reference>
<reference key="12">
    <citation type="journal article" date="1987" name="J. Biol. Chem.">
        <title>Duplication of type IV collagen COOH-terminal repeats and species-specific expression of alpha 1(IV) and alpha 2(IV) collagen genes.</title>
        <authorList>
            <person name="Myers J.C."/>
            <person name="Howard P.S."/>
            <person name="Jelen A.M."/>
            <person name="Dion A.S."/>
            <person name="Macarak E.J."/>
        </authorList>
    </citation>
    <scope>NUCLEOTIDE SEQUENCE [MRNA] OF 1486-1712</scope>
</reference>
<reference key="13">
    <citation type="journal article" date="2000" name="J. Biol. Chem.">
        <title>Canstatin, a novel matrix-derived inhibitor of angiogenesis and tumor growth.</title>
        <authorList>
            <person name="Kamphaus G.D."/>
            <person name="Colorado P.C."/>
            <person name="Panka D.J."/>
            <person name="Hopfer H."/>
            <person name="Ramchandran R."/>
            <person name="Torre A."/>
            <person name="Maeshima Y."/>
            <person name="Mier J.W."/>
            <person name="Sukhatme V.P."/>
            <person name="Kalluri R."/>
        </authorList>
    </citation>
    <scope>NUCLEOTIDE SEQUENCE [MRNA] OF 1486-1712</scope>
    <scope>FUNCTION</scope>
</reference>
<reference key="14">
    <citation type="submission" date="2001-07" db="EMBL/GenBank/DDBJ databases">
        <authorList>
            <person name="Peng X."/>
            <person name="Sun W."/>
            <person name="Yin B."/>
            <person name="Yuan J."/>
            <person name="Qiang B."/>
        </authorList>
    </citation>
    <scope>NUCLEOTIDE SEQUENCE [MRNA] OF 1486-1712</scope>
</reference>
<reference key="15">
    <citation type="submission" date="2003-10" db="EMBL/GenBank/DDBJ databases">
        <title>Molecular cloning and homologous sequence analysis of canstatin cDNA derived from Chinese hepatocytes.</title>
        <authorList>
            <person name="Li Y."/>
            <person name="Huang G."/>
            <person name="Qian G."/>
        </authorList>
    </citation>
    <scope>NUCLEOTIDE SEQUENCE [MRNA] OF 1486-1712</scope>
    <source>
        <tissue>Hepatocyte</tissue>
    </source>
</reference>
<reference key="16">
    <citation type="submission" date="2003-10" db="EMBL/GenBank/DDBJ databases">
        <title>Cloning and expression of canstatin in yeast.</title>
        <authorList>
            <person name="Shan Z.X."/>
            <person name="Yu X.Y."/>
            <person name="Lin Q.X."/>
            <person name="Fu Y.H."/>
            <person name="Yang M."/>
            <person name="Tan H.H."/>
        </authorList>
    </citation>
    <scope>NUCLEOTIDE SEQUENCE [MRNA] OF 1486-1712</scope>
</reference>
<reference key="17">
    <citation type="journal article" date="2003" name="J. Biol. Chem.">
        <title>Canstatin inhibits Akt activation and induces Fas-dependent apoptosis in endothelial cells.</title>
        <authorList>
            <person name="Panka D.J."/>
            <person name="Mier J.W."/>
        </authorList>
    </citation>
    <scope>FUNCTION OF CANSTATIN</scope>
</reference>
<reference key="18">
    <citation type="journal article" date="2005" name="Cancer Res.">
        <title>Canstatin acts on endothelial and tumor cells via mitochondrial damage initiated through interaction with alphavbeta3 and alphavbeta5 integrins.</title>
        <authorList>
            <person name="Magnon C."/>
            <person name="Galaup A."/>
            <person name="Mullan B."/>
            <person name="Rouffiac V."/>
            <person name="Bouquet C."/>
            <person name="Bidart J.M."/>
            <person name="Griscelli F."/>
            <person name="Opolon P."/>
            <person name="Perricaudet M."/>
        </authorList>
    </citation>
    <scope>FUNCTION OF CANSTATIN</scope>
</reference>
<reference key="19">
    <citation type="journal article" date="2011" name="BMC Syst. Biol.">
        <title>Initial characterization of the human central proteome.</title>
        <authorList>
            <person name="Burkard T.R."/>
            <person name="Planyavsky M."/>
            <person name="Kaupe I."/>
            <person name="Breitwieser F.P."/>
            <person name="Buerckstuemmer T."/>
            <person name="Bennett K.L."/>
            <person name="Superti-Furga G."/>
            <person name="Colinge J."/>
        </authorList>
    </citation>
    <scope>IDENTIFICATION BY MASS SPECTROMETRY [LARGE SCALE ANALYSIS]</scope>
</reference>
<reference key="20">
    <citation type="journal article" date="2014" name="J. Proteomics">
        <title>An enzyme assisted RP-RPLC approach for in-depth analysis of human liver phosphoproteome.</title>
        <authorList>
            <person name="Bian Y."/>
            <person name="Song C."/>
            <person name="Cheng K."/>
            <person name="Dong M."/>
            <person name="Wang F."/>
            <person name="Huang J."/>
            <person name="Sun D."/>
            <person name="Wang L."/>
            <person name="Ye M."/>
            <person name="Zou H."/>
        </authorList>
    </citation>
    <scope>IDENTIFICATION BY MASS SPECTROMETRY [LARGE SCALE ANALYSIS]</scope>
    <source>
        <tissue>Liver</tissue>
    </source>
</reference>
<reference key="21">
    <citation type="journal article" date="2020" name="Proc. Natl. Acad. Sci. U.S.A.">
        <title>Peroxidasin-mediated bromine enrichment of basement membranes.</title>
        <authorList>
            <person name="He C."/>
            <person name="Song W."/>
            <person name="Weston T.A."/>
            <person name="Tran C."/>
            <person name="Kurtz I."/>
            <person name="Zuckerman J.E."/>
            <person name="Guagliardo P."/>
            <person name="Miner J.H."/>
            <person name="Ivanov S.V."/>
            <person name="Bougoure J."/>
            <person name="Hudson B.G."/>
            <person name="Colon S."/>
            <person name="Voziyan P.A."/>
            <person name="Bhave G."/>
            <person name="Fong L.G."/>
            <person name="Young S.G."/>
            <person name="Jiang H."/>
        </authorList>
    </citation>
    <scope>BROMINATION AT TYR-1490</scope>
    <scope>IDENTIFICATION BY MASS SPECTROMETRY</scope>
</reference>
<reference key="22">
    <citation type="journal article" date="2002" name="Proc. Natl. Acad. Sci. U.S.A.">
        <title>The 1.9-A crystal structure of the noncollagenous (NC1) domain of human placenta collagen IV shows stabilization via a novel type of covalent Met-Lys cross-link.</title>
        <authorList>
            <person name="Than M.E."/>
            <person name="Henrich S."/>
            <person name="Huber R."/>
            <person name="Ries A."/>
            <person name="Mann K."/>
            <person name="Kuhn K."/>
            <person name="Timpl R."/>
            <person name="Bourenkov G.P."/>
            <person name="Bartunik H.D."/>
            <person name="Bode W."/>
        </authorList>
    </citation>
    <scope>X-RAY CRYSTALLOGRAPHY (1.9 ANGSTROMS) OF 1485-1712</scope>
</reference>
<reference key="23">
    <citation type="journal article" date="2011" name="Mol. Vis.">
        <title>Sequence variants in COL4A1 and COL4A2 genes in Ecuadorian families with keratoconus.</title>
        <authorList>
            <person name="Karolak J.A."/>
            <person name="Kulinska K."/>
            <person name="Nowak D.M."/>
            <person name="Pitarque J.A."/>
            <person name="Molinari A."/>
            <person name="Rydzanicz M."/>
            <person name="Bejjani B.A."/>
            <person name="Gajecka M."/>
        </authorList>
    </citation>
    <scope>VARIANTS PHE-192; LYS-517; ALA-683; ARG-701 AND SER-718</scope>
</reference>
<reference key="24">
    <citation type="journal article" date="2012" name="Am. J. Hum. Genet.">
        <title>De novo and inherited mutations in COL4A2, encoding the type IV collagen alpha2 chain cause porencephaly.</title>
        <authorList>
            <person name="Yoneda Y."/>
            <person name="Haginoya K."/>
            <person name="Arai H."/>
            <person name="Yamaoka S."/>
            <person name="Tsurusaki Y."/>
            <person name="Doi H."/>
            <person name="Miyake N."/>
            <person name="Yokochi K."/>
            <person name="Osaka H."/>
            <person name="Kato M."/>
            <person name="Matsumoto N."/>
            <person name="Saitsu H."/>
        </authorList>
    </citation>
    <scope>VARIANTS BSVD2 GLU-1037 AND ASP-1152</scope>
</reference>
<reference key="25">
    <citation type="journal article" date="2012" name="Am. J. Hum. Genet.">
        <title>COL4A2 mutations impair COL4A1 and COL4A2 secretion and cause hemorrhagic stroke.</title>
        <authorList>
            <person name="Jeanne M."/>
            <person name="Labelle-Dumais C."/>
            <person name="Jorgensen J."/>
            <person name="Kauffman W.B."/>
            <person name="Mancini G.M."/>
            <person name="Favor J."/>
            <person name="Valant V."/>
            <person name="Greenberg S.M."/>
            <person name="Rosand J."/>
            <person name="Gould D.B."/>
        </authorList>
    </citation>
    <scope>INVOLVEMENT IN SUSCEPTIBILITY TO ICH</scope>
    <scope>VARIANTS PHE-192; LYS-517; ALA-683; ARG-701; SER-718; GLN-1109; GLY-1123; LYS-1150; ILE-1399 AND THR-1690</scope>
    <scope>CHARACTERIZATION OF VARIANTS GLY-1123; LYS-1150 AND THR-1690</scope>
</reference>
<reference key="26">
    <citation type="journal article" date="2012" name="Eur. J. Hum. Genet.">
        <title>COL4A2 mutation associated with familial porencephaly and small-vessel disease.</title>
        <authorList>
            <person name="Verbeek E."/>
            <person name="Meuwissen M.E."/>
            <person name="Verheijen F.W."/>
            <person name="Govaert P.P."/>
            <person name="Licht D.J."/>
            <person name="Kuo D.S."/>
            <person name="Poulton C.J."/>
            <person name="Schot R."/>
            <person name="Lequin M.H."/>
            <person name="Dudink J."/>
            <person name="Halley D.J."/>
            <person name="de Coo R.I."/>
            <person name="den Hollander J.C."/>
            <person name="Oegema R."/>
            <person name="Gould D.B."/>
            <person name="Mancini G.M."/>
        </authorList>
    </citation>
    <scope>VARIANT ARG-1389</scope>
</reference>
<evidence type="ECO:0000250" key="1"/>
<evidence type="ECO:0000250" key="2">
    <source>
        <dbReference type="UniProtKB" id="P08122"/>
    </source>
</evidence>
<evidence type="ECO:0000255" key="3">
    <source>
        <dbReference type="PROSITE-ProRule" id="PRU00736"/>
    </source>
</evidence>
<evidence type="ECO:0000256" key="4">
    <source>
        <dbReference type="SAM" id="MobiDB-lite"/>
    </source>
</evidence>
<evidence type="ECO:0000269" key="5">
    <source>
    </source>
</evidence>
<evidence type="ECO:0000269" key="6">
    <source>
    </source>
</evidence>
<evidence type="ECO:0000269" key="7">
    <source>
    </source>
</evidence>
<evidence type="ECO:0000269" key="8">
    <source>
    </source>
</evidence>
<evidence type="ECO:0000269" key="9">
    <source>
    </source>
</evidence>
<evidence type="ECO:0000269" key="10">
    <source>
    </source>
</evidence>
<evidence type="ECO:0000269" key="11">
    <source>
    </source>
</evidence>
<evidence type="ECO:0000269" key="12">
    <source>
    </source>
</evidence>
<evidence type="ECO:0000305" key="13"/>
<evidence type="ECO:0000312" key="14">
    <source>
        <dbReference type="HGNC" id="HGNC:2203"/>
    </source>
</evidence>
<evidence type="ECO:0007829" key="15">
    <source>
        <dbReference type="PDB" id="1LI1"/>
    </source>
</evidence>
<evidence type="ECO:0007829" key="16">
    <source>
        <dbReference type="PDB" id="5NAX"/>
    </source>
</evidence>
<evidence type="ECO:0007829" key="17">
    <source>
        <dbReference type="PDB" id="6MPX"/>
    </source>
</evidence>
<name>CO4A2_HUMAN</name>
<organism>
    <name type="scientific">Homo sapiens</name>
    <name type="common">Human</name>
    <dbReference type="NCBI Taxonomy" id="9606"/>
    <lineage>
        <taxon>Eukaryota</taxon>
        <taxon>Metazoa</taxon>
        <taxon>Chordata</taxon>
        <taxon>Craniata</taxon>
        <taxon>Vertebrata</taxon>
        <taxon>Euteleostomi</taxon>
        <taxon>Mammalia</taxon>
        <taxon>Eutheria</taxon>
        <taxon>Euarchontoglires</taxon>
        <taxon>Primates</taxon>
        <taxon>Haplorrhini</taxon>
        <taxon>Catarrhini</taxon>
        <taxon>Hominidae</taxon>
        <taxon>Homo</taxon>
    </lineage>
</organism>
<comment type="function">
    <text>Type IV collagen is the major structural component of glomerular basement membranes (GBM), forming a 'chicken-wire' meshwork together with laminins, proteoglycans and entactin/nidogen.</text>
</comment>
<comment type="function">
    <text>Canstatin, a cleavage product corresponding to the collagen alpha 2(IV) NC1 domain, possesses both anti-angiogenic and anti-tumor cell activity. It inhibits proliferation and migration of endothelial cells, reduces mitochondrial membrane potential, and induces apoptosis. Specifically induces Fas-dependent apoptosis and activates procaspase-8 and -9 activity. Ligand for alphavbeta3 and alphavbeta5 integrins.</text>
</comment>
<comment type="subunit">
    <text evidence="2">There are six type IV collagen isoforms, alpha 1(IV)-alpha 6(IV), each of which can form a triple helix structure with 2 other chains to generate type IV collagen network. Interacts with EFEMP2 (By similarity).</text>
</comment>
<comment type="interaction">
    <interactant intactId="EBI-2432506">
        <id>P08572</id>
    </interactant>
    <interactant intactId="EBI-2432478">
        <id>P02462</id>
        <label>COL4A1</label>
    </interactant>
    <organismsDiffer>false</organismsDiffer>
    <experiments>2</experiments>
</comment>
<comment type="subcellular location">
    <subcellularLocation>
        <location>Secreted</location>
        <location>Extracellular space</location>
        <location>Extracellular matrix</location>
        <location>Basement membrane</location>
    </subcellularLocation>
</comment>
<comment type="domain">
    <text>Alpha chains of type IV collagen have a non-collagenous domain (NC1) at their C-terminus, frequent interruptions of the G-X-Y repeats in the long central triple-helical domain (which may cause flexibility in the triple helix), and a short N-terminal triple-helical 7S domain.</text>
</comment>
<comment type="PTM">
    <text>Prolines at the third position of the tripeptide repeating unit (G-X-Y) are hydroxylated in some or all of the chains.</text>
</comment>
<comment type="PTM">
    <text>Type IV collagens contain numerous cysteine residues which are involved in inter- and intramolecular disulfide bonding. 12 of these, located in the NC1 domain, are conserved in all known type IV collagens.</text>
</comment>
<comment type="PTM">
    <text evidence="1">The trimeric structure of the NC1 domains is stabilized by covalent bonds between Lys and Met residues.</text>
</comment>
<comment type="PTM">
    <text>Proteolytic processing produces the C-terminal NC1 peptide, canstatin.</text>
</comment>
<comment type="disease" evidence="6">
    <disease id="DI-03378">
        <name>Brain small vessel disease 2</name>
        <acronym>BSVD2</acronym>
        <description>An autosomal dominant cerebrovascular disorder with variable manifestations reflecting the location and severity of the vascular defect. BSVD2 features include intracranial hemorrage, fluid-filled cysts or cavities within the cerebral hemispheres, delayed psychomotor development, hemiplegia, spasticity and seizures.</description>
        <dbReference type="MIM" id="614483"/>
    </disease>
    <text>The disease is caused by variants affecting the gene represented in this entry.</text>
</comment>
<comment type="disease" evidence="7">
    <disease id="DI-03406">
        <name>Intracerebral hemorrhage</name>
        <acronym>ICH</acronym>
        <description>A pathological condition characterized by bleeding into one or both cerebral hemispheres including the basal ganglia and the cerebral cortex. It is often associated with hypertension and craniocerebral trauma. Intracerebral bleeding is a common cause of stroke.</description>
        <dbReference type="MIM" id="614519"/>
    </disease>
    <text>Disease susceptibility is associated with variants affecting the gene represented in this entry.</text>
</comment>
<comment type="similarity">
    <text evidence="3">Belongs to the type IV collagen family.</text>
</comment>
<proteinExistence type="evidence at protein level"/>
<keyword id="KW-0002">3D-structure</keyword>
<keyword id="KW-0037">Angiogenesis</keyword>
<keyword id="KW-0084">Basement membrane</keyword>
<keyword id="KW-0102">Bromination</keyword>
<keyword id="KW-0176">Collagen</keyword>
<keyword id="KW-0903">Direct protein sequencing</keyword>
<keyword id="KW-0225">Disease variant</keyword>
<keyword id="KW-1015">Disulfide bond</keyword>
<keyword id="KW-0272">Extracellular matrix</keyword>
<keyword id="KW-0325">Glycoprotein</keyword>
<keyword id="KW-0379">Hydroxylation</keyword>
<keyword id="KW-1267">Proteomics identification</keyword>
<keyword id="KW-1185">Reference proteome</keyword>
<keyword id="KW-0677">Repeat</keyword>
<keyword id="KW-0964">Secreted</keyword>
<keyword id="KW-0732">Signal</keyword>